<sequence>MPHGQPCGACDGSCRMAQRGTPSTSPLIPSLTPSPPAGDPSPRSSQRIDAVRVPARLPGGSDHPEYGMPLSPRALRPYLARGPGAFCAPPWRPDVNRLAGDVNRLFRGISTSSIHVTEDSRTLRRALLDFYAMGYTHTRPTLECWQSLLQLLPEQSFPLRATLRALNSEDRYEQRFLEPPSDPPNTLFGEECDVSGDESPSEEEEEDEASGESSVSEFSPEEETASSEYDSFSDVGEDDSSCTGKWSSSESESDSESDAPTNNHHPTTRASAAKKRRKRQPPKGERPTKSARR</sequence>
<organismHost>
    <name type="scientific">Equus caballus</name>
    <name type="common">Horse</name>
    <dbReference type="NCBI Taxonomy" id="9796"/>
</organismHost>
<dbReference type="EMBL" id="AY665713">
    <property type="protein sequence ID" value="AAT67322.1"/>
    <property type="molecule type" value="Genomic_DNA"/>
</dbReference>
<dbReference type="EMBL" id="AY665713">
    <property type="protein sequence ID" value="AAT67336.1"/>
    <property type="molecule type" value="Genomic_DNA"/>
</dbReference>
<dbReference type="PIR" id="B36802">
    <property type="entry name" value="EDBEF7"/>
</dbReference>
<dbReference type="KEGG" id="vg:2948568"/>
<dbReference type="KEGG" id="vg:2948573"/>
<dbReference type="Proteomes" id="UP000001189">
    <property type="component" value="Segment"/>
</dbReference>
<dbReference type="GO" id="GO:0010468">
    <property type="term" value="P:regulation of gene expression"/>
    <property type="evidence" value="ECO:0007669"/>
    <property type="project" value="InterPro"/>
</dbReference>
<dbReference type="InterPro" id="IPR003403">
    <property type="entry name" value="IE68"/>
</dbReference>
<dbReference type="Pfam" id="PF02479">
    <property type="entry name" value="Herpes_IE68"/>
    <property type="match status" value="1"/>
</dbReference>
<protein>
    <recommendedName>
        <fullName>Transcriptional regulator ICP22 homolog</fullName>
    </recommendedName>
    <alternativeName>
        <fullName>IR4 protein</fullName>
    </alternativeName>
    <alternativeName>
        <fullName>Immediate-early protein IE68</fullName>
    </alternativeName>
    <alternativeName>
        <fullName>In vitro host-range factor</fullName>
    </alternativeName>
    <alternativeName>
        <fullName>ORF S1-2</fullName>
    </alternativeName>
</protein>
<gene>
    <name type="primary">IR4</name>
    <name type="ordered locus">65</name>
</gene>
<reference key="1">
    <citation type="journal article" date="1992" name="Virology">
        <title>The DNA sequence of equine herpesvirus-1.</title>
        <authorList>
            <person name="Telford E.A.R."/>
            <person name="Watson M.S."/>
            <person name="McBride K."/>
            <person name="Davison A.J."/>
        </authorList>
    </citation>
    <scope>NUCLEOTIDE SEQUENCE [LARGE SCALE GENOMIC DNA]</scope>
</reference>
<keyword id="KW-0244">Early protein</keyword>
<keyword id="KW-1185">Reference proteome</keyword>
<comment type="similarity">
    <text evidence="2">Belongs to the herpesviridae ICP22 family.</text>
</comment>
<evidence type="ECO:0000256" key="1">
    <source>
        <dbReference type="SAM" id="MobiDB-lite"/>
    </source>
</evidence>
<evidence type="ECO:0000305" key="2"/>
<name>ICP22_EHV1B</name>
<feature type="chain" id="PRO_0000115839" description="Transcriptional regulator ICP22 homolog">
    <location>
        <begin position="1"/>
        <end position="293"/>
    </location>
</feature>
<feature type="region of interest" description="Disordered" evidence="1">
    <location>
        <begin position="1"/>
        <end position="49"/>
    </location>
</feature>
<feature type="region of interest" description="Disordered" evidence="1">
    <location>
        <begin position="175"/>
        <end position="293"/>
    </location>
</feature>
<feature type="compositionally biased region" description="Low complexity" evidence="1">
    <location>
        <begin position="21"/>
        <end position="31"/>
    </location>
</feature>
<feature type="compositionally biased region" description="Acidic residues" evidence="1">
    <location>
        <begin position="190"/>
        <end position="210"/>
    </location>
</feature>
<feature type="compositionally biased region" description="Basic residues" evidence="1">
    <location>
        <begin position="272"/>
        <end position="281"/>
    </location>
</feature>
<feature type="compositionally biased region" description="Basic and acidic residues" evidence="1">
    <location>
        <begin position="282"/>
        <end position="293"/>
    </location>
</feature>
<organism>
    <name type="scientific">Equine herpesvirus 1 (strain Ab4p)</name>
    <name type="common">EHV-1</name>
    <name type="synonym">Equine abortion virus</name>
    <dbReference type="NCBI Taxonomy" id="31520"/>
    <lineage>
        <taxon>Viruses</taxon>
        <taxon>Duplodnaviria</taxon>
        <taxon>Heunggongvirae</taxon>
        <taxon>Peploviricota</taxon>
        <taxon>Herviviricetes</taxon>
        <taxon>Herpesvirales</taxon>
        <taxon>Orthoherpesviridae</taxon>
        <taxon>Alphaherpesvirinae</taxon>
        <taxon>Varicellovirus</taxon>
        <taxon>Varicellovirus equidalpha1</taxon>
        <taxon>Equid alphaherpesvirus 1</taxon>
    </lineage>
</organism>
<accession>Q6S6W5</accession>
<accession>P28940</accession>
<proteinExistence type="inferred from homology"/>